<protein>
    <recommendedName>
        <fullName>Cytochrome c oxidase subunit 3</fullName>
        <ecNumber>7.1.1.9</ecNumber>
    </recommendedName>
    <alternativeName>
        <fullName>Cytochrome c oxidase polypeptide III</fullName>
    </alternativeName>
</protein>
<gene>
    <name type="primary">cox3</name>
</gene>
<proteinExistence type="inferred from homology"/>
<keyword id="KW-0472">Membrane</keyword>
<keyword id="KW-0496">Mitochondrion</keyword>
<keyword id="KW-0999">Mitochondrion inner membrane</keyword>
<keyword id="KW-1278">Translocase</keyword>
<keyword id="KW-0812">Transmembrane</keyword>
<keyword id="KW-1133">Transmembrane helix</keyword>
<evidence type="ECO:0000250" key="1">
    <source>
        <dbReference type="UniProtKB" id="P00420"/>
    </source>
</evidence>
<evidence type="ECO:0000255" key="2"/>
<evidence type="ECO:0000305" key="3"/>
<organism>
    <name type="scientific">Dictyostelium citrinum</name>
    <name type="common">Slime mold</name>
    <dbReference type="NCBI Taxonomy" id="361072"/>
    <lineage>
        <taxon>Eukaryota</taxon>
        <taxon>Amoebozoa</taxon>
        <taxon>Evosea</taxon>
        <taxon>Eumycetozoa</taxon>
        <taxon>Dictyostelia</taxon>
        <taxon>Dictyosteliales</taxon>
        <taxon>Dictyosteliaceae</taxon>
        <taxon>Dictyostelium</taxon>
    </lineage>
</organism>
<geneLocation type="mitochondrion"/>
<name>COX3_DICCI</name>
<sequence length="431" mass="49659">MKRFFENLFSQTERSVLNTGKKVGAGIAAGEWKNTEWGYPIATQEVIFLAKVFQPQHVKRHPYHIVRGTIAPLAVTLPLAFFVLNYFGVISSKIGFVIALSSFIGGLTIWAISIVFDSLYDQQHTYEVKRGLVMGMMMFIISEIMFFFSFFWSYFYISLSPNIAIGCVWPPYGLTVYSYMGLPLLNTVLLLLSGAILTDGYTILTEQKAVHENNEKVIAVEEAFTNLMNLYTKKQSINTLTFVDERREKFFAKNDQNAEKKEIAISAGVKELRDLDWDLYFFENPQNMEPNYKAPTDLSVIEYALITIFLKKRNKVIKTRLYFTLVCAVVFLFCQGYEYYFAPFSMNDGIYGSLFFLLTGFHGFHVLVGSILIGIITIRFIVGNFDLLNVGTKFQIFKNKSTGFACTLFYWHFVDIVWIFLYIVIYWWGSR</sequence>
<feature type="chain" id="PRO_0000312387" description="Cytochrome c oxidase subunit 3">
    <location>
        <begin position="1"/>
        <end position="431"/>
    </location>
</feature>
<feature type="transmembrane region" description="Helical" evidence="2">
    <location>
        <begin position="70"/>
        <end position="90"/>
    </location>
</feature>
<feature type="transmembrane region" description="Helical" evidence="2">
    <location>
        <begin position="96"/>
        <end position="116"/>
    </location>
</feature>
<feature type="transmembrane region" description="Helical" evidence="2">
    <location>
        <begin position="132"/>
        <end position="152"/>
    </location>
</feature>
<feature type="transmembrane region" description="Helical" evidence="2">
    <location>
        <begin position="176"/>
        <end position="196"/>
    </location>
</feature>
<feature type="transmembrane region" description="Helical" evidence="2">
    <location>
        <begin position="321"/>
        <end position="341"/>
    </location>
</feature>
<feature type="transmembrane region" description="Helical" evidence="2">
    <location>
        <begin position="356"/>
        <end position="376"/>
    </location>
</feature>
<feature type="transmembrane region" description="Helical" evidence="2">
    <location>
        <begin position="408"/>
        <end position="428"/>
    </location>
</feature>
<dbReference type="EC" id="7.1.1.9"/>
<dbReference type="EMBL" id="DQ336395">
    <property type="protein sequence ID" value="ABC60394.1"/>
    <property type="molecule type" value="Genomic_DNA"/>
</dbReference>
<dbReference type="RefSeq" id="YP_492643.1">
    <property type="nucleotide sequence ID" value="NC_007787.2"/>
</dbReference>
<dbReference type="SMR" id="Q2LCP9"/>
<dbReference type="GeneID" id="3912631"/>
<dbReference type="GO" id="GO:0005743">
    <property type="term" value="C:mitochondrial inner membrane"/>
    <property type="evidence" value="ECO:0007669"/>
    <property type="project" value="UniProtKB-SubCell"/>
</dbReference>
<dbReference type="GO" id="GO:0004129">
    <property type="term" value="F:cytochrome-c oxidase activity"/>
    <property type="evidence" value="ECO:0007669"/>
    <property type="project" value="UniProtKB-EC"/>
</dbReference>
<dbReference type="GO" id="GO:0006123">
    <property type="term" value="P:mitochondrial electron transport, cytochrome c to oxygen"/>
    <property type="evidence" value="ECO:0007669"/>
    <property type="project" value="TreeGrafter"/>
</dbReference>
<dbReference type="CDD" id="cd01665">
    <property type="entry name" value="Cyt_c_Oxidase_III"/>
    <property type="match status" value="1"/>
</dbReference>
<dbReference type="Gene3D" id="1.20.120.80">
    <property type="entry name" value="Cytochrome c oxidase, subunit III, four-helix bundle"/>
    <property type="match status" value="2"/>
</dbReference>
<dbReference type="InterPro" id="IPR024791">
    <property type="entry name" value="Cyt_c/ubiquinol_Oxase_su3"/>
</dbReference>
<dbReference type="InterPro" id="IPR033945">
    <property type="entry name" value="Cyt_c_oxase_su3_dom"/>
</dbReference>
<dbReference type="InterPro" id="IPR000298">
    <property type="entry name" value="Cyt_c_oxidase-like_su3"/>
</dbReference>
<dbReference type="InterPro" id="IPR035973">
    <property type="entry name" value="Cyt_c_oxidase_su3-like_sf"/>
</dbReference>
<dbReference type="InterPro" id="IPR013833">
    <property type="entry name" value="Cyt_c_oxidase_su3_a-hlx"/>
</dbReference>
<dbReference type="PANTHER" id="PTHR11403:SF7">
    <property type="entry name" value="CYTOCHROME C OXIDASE SUBUNIT 3"/>
    <property type="match status" value="1"/>
</dbReference>
<dbReference type="PANTHER" id="PTHR11403">
    <property type="entry name" value="CYTOCHROME C OXIDASE SUBUNIT III"/>
    <property type="match status" value="1"/>
</dbReference>
<dbReference type="Pfam" id="PF00510">
    <property type="entry name" value="COX3"/>
    <property type="match status" value="2"/>
</dbReference>
<dbReference type="SUPFAM" id="SSF81452">
    <property type="entry name" value="Cytochrome c oxidase subunit III-like"/>
    <property type="match status" value="2"/>
</dbReference>
<dbReference type="PROSITE" id="PS50253">
    <property type="entry name" value="COX3"/>
    <property type="match status" value="1"/>
</dbReference>
<comment type="function">
    <text evidence="1">Component of the cytochrome c oxidase, the last enzyme in the mitochondrial electron transport chain which drives oxidative phosphorylation. The respiratory chain contains 3 multisubunit complexes succinate dehydrogenase (complex II, CII), ubiquinol-cytochrome c oxidoreductase (cytochrome b-c1 complex, complex III, CIII) and cytochrome c oxidase (complex IV, CIV), that cooperate to transfer electrons derived from NADH and succinate to molecular oxygen, creating an electrochemical gradient over the inner membrane that drives transmembrane transport and the ATP synthase. Cytochrome c oxidase is the component of the respiratory chain that catalyzes the reduction of oxygen to water. Electrons originating from reduced cytochrome c in the intermembrane space (IMS) are transferred via the dinuclear copper A center (CU(A)) of subunit 2 and heme A of subunit 1 to the active site in subunit 1, a binuclear center (BNC) formed by heme A3 and copper B (CU(B)). The BNC reduces molecular oxygen to 2 water molecules using 4 electrons from cytochrome c in the IMS and 4 protons from the mitochondrial matrix.</text>
</comment>
<comment type="catalytic activity">
    <reaction evidence="1">
        <text>4 Fe(II)-[cytochrome c] + O2 + 8 H(+)(in) = 4 Fe(III)-[cytochrome c] + 2 H2O + 4 H(+)(out)</text>
        <dbReference type="Rhea" id="RHEA:11436"/>
        <dbReference type="Rhea" id="RHEA-COMP:10350"/>
        <dbReference type="Rhea" id="RHEA-COMP:14399"/>
        <dbReference type="ChEBI" id="CHEBI:15377"/>
        <dbReference type="ChEBI" id="CHEBI:15378"/>
        <dbReference type="ChEBI" id="CHEBI:15379"/>
        <dbReference type="ChEBI" id="CHEBI:29033"/>
        <dbReference type="ChEBI" id="CHEBI:29034"/>
        <dbReference type="EC" id="7.1.1.9"/>
    </reaction>
    <physiologicalReaction direction="left-to-right" evidence="1">
        <dbReference type="Rhea" id="RHEA:11437"/>
    </physiologicalReaction>
</comment>
<comment type="subunit">
    <text evidence="1">Component of the cytochrome c oxidase (complex IV, CIV), a multisubunit enzyme composed of a catalytic core of 3 subunits and several supernumerary subunits. The complex exists as a monomer or a dimer and forms supercomplexes (SCs) in the inner mitochondrial membrane with ubiquinol-cytochrome c oxidoreductase (cytochrome b-c1 complex, complex III, CIII).</text>
</comment>
<comment type="subcellular location">
    <subcellularLocation>
        <location evidence="1">Mitochondrion inner membrane</location>
        <topology evidence="1">Multi-pass membrane protein</topology>
    </subcellularLocation>
</comment>
<comment type="similarity">
    <text evidence="3">Belongs to the cytochrome c oxidase subunit 3 family.</text>
</comment>
<accession>Q2LCP9</accession>
<reference key="1">
    <citation type="journal article" date="2008" name="Mol. Biol. Evol.">
        <title>Mitochondrial genome evolution in the social amoebae.</title>
        <authorList>
            <person name="Heidel A.J."/>
            <person name="Gloeckner G."/>
        </authorList>
    </citation>
    <scope>NUCLEOTIDE SEQUENCE [LARGE SCALE GENOMIC DNA]</scope>
</reference>